<accession>A6W1T1</accession>
<comment type="function">
    <text evidence="1">Catalyzes the oxidation of 5,10-methylenetetrahydrofolate to 5,10-methenyltetrahydrofolate and then the hydrolysis of 5,10-methenyltetrahydrofolate to 10-formyltetrahydrofolate.</text>
</comment>
<comment type="catalytic activity">
    <reaction evidence="1">
        <text>(6R)-5,10-methylene-5,6,7,8-tetrahydrofolate + NADP(+) = (6R)-5,10-methenyltetrahydrofolate + NADPH</text>
        <dbReference type="Rhea" id="RHEA:22812"/>
        <dbReference type="ChEBI" id="CHEBI:15636"/>
        <dbReference type="ChEBI" id="CHEBI:57455"/>
        <dbReference type="ChEBI" id="CHEBI:57783"/>
        <dbReference type="ChEBI" id="CHEBI:58349"/>
        <dbReference type="EC" id="1.5.1.5"/>
    </reaction>
</comment>
<comment type="catalytic activity">
    <reaction evidence="1">
        <text>(6R)-5,10-methenyltetrahydrofolate + H2O = (6R)-10-formyltetrahydrofolate + H(+)</text>
        <dbReference type="Rhea" id="RHEA:23700"/>
        <dbReference type="ChEBI" id="CHEBI:15377"/>
        <dbReference type="ChEBI" id="CHEBI:15378"/>
        <dbReference type="ChEBI" id="CHEBI:57455"/>
        <dbReference type="ChEBI" id="CHEBI:195366"/>
        <dbReference type="EC" id="3.5.4.9"/>
    </reaction>
</comment>
<comment type="pathway">
    <text evidence="1">One-carbon metabolism; tetrahydrofolate interconversion.</text>
</comment>
<comment type="subunit">
    <text evidence="1">Homodimer.</text>
</comment>
<comment type="similarity">
    <text evidence="1">Belongs to the tetrahydrofolate dehydrogenase/cyclohydrolase family.</text>
</comment>
<reference key="1">
    <citation type="submission" date="2007-06" db="EMBL/GenBank/DDBJ databases">
        <title>Complete sequence of Marinomonas sp. MWYL1.</title>
        <authorList>
            <consortium name="US DOE Joint Genome Institute"/>
            <person name="Copeland A."/>
            <person name="Lucas S."/>
            <person name="Lapidus A."/>
            <person name="Barry K."/>
            <person name="Glavina del Rio T."/>
            <person name="Dalin E."/>
            <person name="Tice H."/>
            <person name="Pitluck S."/>
            <person name="Kiss H."/>
            <person name="Brettin T."/>
            <person name="Bruce D."/>
            <person name="Detter J.C."/>
            <person name="Han C."/>
            <person name="Schmutz J."/>
            <person name="Larimer F."/>
            <person name="Land M."/>
            <person name="Hauser L."/>
            <person name="Kyrpides N."/>
            <person name="Kim E."/>
            <person name="Johnston A.W.B."/>
            <person name="Todd J.D."/>
            <person name="Rogers R."/>
            <person name="Wexler M."/>
            <person name="Bond P.L."/>
            <person name="Li Y."/>
            <person name="Richardson P."/>
        </authorList>
    </citation>
    <scope>NUCLEOTIDE SEQUENCE [LARGE SCALE GENOMIC DNA]</scope>
    <source>
        <strain>MWYL1</strain>
    </source>
</reference>
<keyword id="KW-0028">Amino-acid biosynthesis</keyword>
<keyword id="KW-0368">Histidine biosynthesis</keyword>
<keyword id="KW-0378">Hydrolase</keyword>
<keyword id="KW-0486">Methionine biosynthesis</keyword>
<keyword id="KW-0511">Multifunctional enzyme</keyword>
<keyword id="KW-0521">NADP</keyword>
<keyword id="KW-0554">One-carbon metabolism</keyword>
<keyword id="KW-0560">Oxidoreductase</keyword>
<keyword id="KW-0658">Purine biosynthesis</keyword>
<name>FOLD_MARMS</name>
<feature type="chain" id="PRO_1000087906" description="Bifunctional protein FolD">
    <location>
        <begin position="1"/>
        <end position="280"/>
    </location>
</feature>
<feature type="binding site" evidence="1">
    <location>
        <begin position="166"/>
        <end position="168"/>
    </location>
    <ligand>
        <name>NADP(+)</name>
        <dbReference type="ChEBI" id="CHEBI:58349"/>
    </ligand>
</feature>
<feature type="binding site" evidence="1">
    <location>
        <position position="191"/>
    </location>
    <ligand>
        <name>NADP(+)</name>
        <dbReference type="ChEBI" id="CHEBI:58349"/>
    </ligand>
</feature>
<protein>
    <recommendedName>
        <fullName evidence="1">Bifunctional protein FolD</fullName>
    </recommendedName>
    <domain>
        <recommendedName>
            <fullName evidence="1">Methylenetetrahydrofolate dehydrogenase</fullName>
            <ecNumber evidence="1">1.5.1.5</ecNumber>
        </recommendedName>
    </domain>
    <domain>
        <recommendedName>
            <fullName evidence="1">Methenyltetrahydrofolate cyclohydrolase</fullName>
            <ecNumber evidence="1">3.5.4.9</ecNumber>
        </recommendedName>
    </domain>
</protein>
<organism>
    <name type="scientific">Marinomonas sp. (strain MWYL1)</name>
    <dbReference type="NCBI Taxonomy" id="400668"/>
    <lineage>
        <taxon>Bacteria</taxon>
        <taxon>Pseudomonadati</taxon>
        <taxon>Pseudomonadota</taxon>
        <taxon>Gammaproteobacteria</taxon>
        <taxon>Oceanospirillales</taxon>
        <taxon>Oceanospirillaceae</taxon>
        <taxon>Marinomonas</taxon>
    </lineage>
</organism>
<gene>
    <name evidence="1" type="primary">folD</name>
    <name type="ordered locus">Mmwyl1_3759</name>
</gene>
<proteinExistence type="inferred from homology"/>
<sequence>MTALVLDGKLCAKETENRLQAQVTELKERTGCTPILATILVGADPASATYVKMKGNACRRVGMDSMAIELPESTTTEQLLDKINELNNNPDVHGILLQHPVPAQVDERLCFDAIAAHKDVDGVTCLGFGRMAMKEPAYGAATPAGIMRLLAAYDIQLEGKHVVVVGRSPILGKPMAMMMLNANATVTMCHSRTQNLPEFVKQADVIVGAVGKPELIKADWIKDGAIVVDAGYHPGGIGDIELGPLKDRVAAYTPVPGGVGPMTINTLILQTLESGLKQLG</sequence>
<evidence type="ECO:0000255" key="1">
    <source>
        <dbReference type="HAMAP-Rule" id="MF_01576"/>
    </source>
</evidence>
<dbReference type="EC" id="1.5.1.5" evidence="1"/>
<dbReference type="EC" id="3.5.4.9" evidence="1"/>
<dbReference type="EMBL" id="CP000749">
    <property type="protein sequence ID" value="ABR72660.1"/>
    <property type="molecule type" value="Genomic_DNA"/>
</dbReference>
<dbReference type="SMR" id="A6W1T1"/>
<dbReference type="STRING" id="400668.Mmwyl1_3759"/>
<dbReference type="KEGG" id="mmw:Mmwyl1_3759"/>
<dbReference type="eggNOG" id="COG0190">
    <property type="taxonomic scope" value="Bacteria"/>
</dbReference>
<dbReference type="HOGENOM" id="CLU_034045_2_1_6"/>
<dbReference type="OrthoDB" id="9803580at2"/>
<dbReference type="UniPathway" id="UPA00193"/>
<dbReference type="GO" id="GO:0005829">
    <property type="term" value="C:cytosol"/>
    <property type="evidence" value="ECO:0007669"/>
    <property type="project" value="TreeGrafter"/>
</dbReference>
<dbReference type="GO" id="GO:0004477">
    <property type="term" value="F:methenyltetrahydrofolate cyclohydrolase activity"/>
    <property type="evidence" value="ECO:0007669"/>
    <property type="project" value="UniProtKB-UniRule"/>
</dbReference>
<dbReference type="GO" id="GO:0004488">
    <property type="term" value="F:methylenetetrahydrofolate dehydrogenase (NADP+) activity"/>
    <property type="evidence" value="ECO:0007669"/>
    <property type="project" value="UniProtKB-UniRule"/>
</dbReference>
<dbReference type="GO" id="GO:0000105">
    <property type="term" value="P:L-histidine biosynthetic process"/>
    <property type="evidence" value="ECO:0007669"/>
    <property type="project" value="UniProtKB-KW"/>
</dbReference>
<dbReference type="GO" id="GO:0009086">
    <property type="term" value="P:methionine biosynthetic process"/>
    <property type="evidence" value="ECO:0007669"/>
    <property type="project" value="UniProtKB-KW"/>
</dbReference>
<dbReference type="GO" id="GO:0006164">
    <property type="term" value="P:purine nucleotide biosynthetic process"/>
    <property type="evidence" value="ECO:0007669"/>
    <property type="project" value="UniProtKB-KW"/>
</dbReference>
<dbReference type="GO" id="GO:0035999">
    <property type="term" value="P:tetrahydrofolate interconversion"/>
    <property type="evidence" value="ECO:0007669"/>
    <property type="project" value="UniProtKB-UniRule"/>
</dbReference>
<dbReference type="CDD" id="cd01080">
    <property type="entry name" value="NAD_bind_m-THF_DH_Cyclohyd"/>
    <property type="match status" value="1"/>
</dbReference>
<dbReference type="FunFam" id="3.40.50.720:FF:000094">
    <property type="entry name" value="Bifunctional protein FolD"/>
    <property type="match status" value="1"/>
</dbReference>
<dbReference type="FunFam" id="3.40.50.10860:FF:000005">
    <property type="entry name" value="C-1-tetrahydrofolate synthase, cytoplasmic, putative"/>
    <property type="match status" value="1"/>
</dbReference>
<dbReference type="Gene3D" id="3.40.50.10860">
    <property type="entry name" value="Leucine Dehydrogenase, chain A, domain 1"/>
    <property type="match status" value="1"/>
</dbReference>
<dbReference type="Gene3D" id="3.40.50.720">
    <property type="entry name" value="NAD(P)-binding Rossmann-like Domain"/>
    <property type="match status" value="1"/>
</dbReference>
<dbReference type="HAMAP" id="MF_01576">
    <property type="entry name" value="THF_DHG_CYH"/>
    <property type="match status" value="1"/>
</dbReference>
<dbReference type="InterPro" id="IPR046346">
    <property type="entry name" value="Aminoacid_DH-like_N_sf"/>
</dbReference>
<dbReference type="InterPro" id="IPR036291">
    <property type="entry name" value="NAD(P)-bd_dom_sf"/>
</dbReference>
<dbReference type="InterPro" id="IPR000672">
    <property type="entry name" value="THF_DH/CycHdrlase"/>
</dbReference>
<dbReference type="InterPro" id="IPR020630">
    <property type="entry name" value="THF_DH/CycHdrlase_cat_dom"/>
</dbReference>
<dbReference type="InterPro" id="IPR020867">
    <property type="entry name" value="THF_DH/CycHdrlase_CS"/>
</dbReference>
<dbReference type="InterPro" id="IPR020631">
    <property type="entry name" value="THF_DH/CycHdrlase_NAD-bd_dom"/>
</dbReference>
<dbReference type="NCBIfam" id="NF010788">
    <property type="entry name" value="PRK14192.1"/>
    <property type="match status" value="1"/>
</dbReference>
<dbReference type="PANTHER" id="PTHR48099:SF5">
    <property type="entry name" value="C-1-TETRAHYDROFOLATE SYNTHASE, CYTOPLASMIC"/>
    <property type="match status" value="1"/>
</dbReference>
<dbReference type="PANTHER" id="PTHR48099">
    <property type="entry name" value="C-1-TETRAHYDROFOLATE SYNTHASE, CYTOPLASMIC-RELATED"/>
    <property type="match status" value="1"/>
</dbReference>
<dbReference type="Pfam" id="PF00763">
    <property type="entry name" value="THF_DHG_CYH"/>
    <property type="match status" value="1"/>
</dbReference>
<dbReference type="Pfam" id="PF02882">
    <property type="entry name" value="THF_DHG_CYH_C"/>
    <property type="match status" value="1"/>
</dbReference>
<dbReference type="PRINTS" id="PR00085">
    <property type="entry name" value="THFDHDRGNASE"/>
</dbReference>
<dbReference type="SUPFAM" id="SSF53223">
    <property type="entry name" value="Aminoacid dehydrogenase-like, N-terminal domain"/>
    <property type="match status" value="1"/>
</dbReference>
<dbReference type="SUPFAM" id="SSF51735">
    <property type="entry name" value="NAD(P)-binding Rossmann-fold domains"/>
    <property type="match status" value="1"/>
</dbReference>
<dbReference type="PROSITE" id="PS00767">
    <property type="entry name" value="THF_DHG_CYH_2"/>
    <property type="match status" value="1"/>
</dbReference>